<protein>
    <recommendedName>
        <fullName evidence="1">Uronate isomerase</fullName>
        <ecNumber evidence="1">5.3.1.12</ecNumber>
    </recommendedName>
    <alternativeName>
        <fullName evidence="1">Glucuronate isomerase</fullName>
    </alternativeName>
    <alternativeName>
        <fullName evidence="1">Uronic isomerase</fullName>
    </alternativeName>
</protein>
<feature type="chain" id="PRO_0000172788" description="Uronate isomerase">
    <location>
        <begin position="1"/>
        <end position="466"/>
    </location>
</feature>
<reference key="1">
    <citation type="journal article" date="2002" name="Proc. Natl. Acad. Sci. U.S.A.">
        <title>Complete genome sequence and comparative genomic analysis of an emerging human pathogen, serotype V Streptococcus agalactiae.</title>
        <authorList>
            <person name="Tettelin H."/>
            <person name="Masignani V."/>
            <person name="Cieslewicz M.J."/>
            <person name="Eisen J.A."/>
            <person name="Peterson S.N."/>
            <person name="Wessels M.R."/>
            <person name="Paulsen I.T."/>
            <person name="Nelson K.E."/>
            <person name="Margarit I."/>
            <person name="Read T.D."/>
            <person name="Madoff L.C."/>
            <person name="Wolf A.M."/>
            <person name="Beanan M.J."/>
            <person name="Brinkac L.M."/>
            <person name="Daugherty S.C."/>
            <person name="DeBoy R.T."/>
            <person name="Durkin A.S."/>
            <person name="Kolonay J.F."/>
            <person name="Madupu R."/>
            <person name="Lewis M.R."/>
            <person name="Radune D."/>
            <person name="Fedorova N.B."/>
            <person name="Scanlan D."/>
            <person name="Khouri H.M."/>
            <person name="Mulligan S."/>
            <person name="Carty H.A."/>
            <person name="Cline R.T."/>
            <person name="Van Aken S.E."/>
            <person name="Gill J."/>
            <person name="Scarselli M."/>
            <person name="Mora M."/>
            <person name="Iacobini E.T."/>
            <person name="Brettoni C."/>
            <person name="Galli G."/>
            <person name="Mariani M."/>
            <person name="Vegni F."/>
            <person name="Maione D."/>
            <person name="Rinaudo D."/>
            <person name="Rappuoli R."/>
            <person name="Telford J.L."/>
            <person name="Kasper D.L."/>
            <person name="Grandi G."/>
            <person name="Fraser C.M."/>
        </authorList>
    </citation>
    <scope>NUCLEOTIDE SEQUENCE [LARGE SCALE GENOMIC DNA]</scope>
    <source>
        <strain>ATCC BAA-611 / 2603 V/R</strain>
    </source>
</reference>
<organism>
    <name type="scientific">Streptococcus agalactiae serotype V (strain ATCC BAA-611 / 2603 V/R)</name>
    <dbReference type="NCBI Taxonomy" id="208435"/>
    <lineage>
        <taxon>Bacteria</taxon>
        <taxon>Bacillati</taxon>
        <taxon>Bacillota</taxon>
        <taxon>Bacilli</taxon>
        <taxon>Lactobacillales</taxon>
        <taxon>Streptococcaceae</taxon>
        <taxon>Streptococcus</taxon>
    </lineage>
</organism>
<name>UXAC_STRA5</name>
<accession>Q8E0M9</accession>
<evidence type="ECO:0000255" key="1">
    <source>
        <dbReference type="HAMAP-Rule" id="MF_00675"/>
    </source>
</evidence>
<proteinExistence type="inferred from homology"/>
<keyword id="KW-0413">Isomerase</keyword>
<keyword id="KW-1185">Reference proteome</keyword>
<comment type="catalytic activity">
    <reaction evidence="1">
        <text>D-glucuronate = D-fructuronate</text>
        <dbReference type="Rhea" id="RHEA:13049"/>
        <dbReference type="ChEBI" id="CHEBI:58720"/>
        <dbReference type="ChEBI" id="CHEBI:59863"/>
        <dbReference type="EC" id="5.3.1.12"/>
    </reaction>
</comment>
<comment type="catalytic activity">
    <reaction evidence="1">
        <text>aldehydo-D-galacturonate = keto-D-tagaturonate</text>
        <dbReference type="Rhea" id="RHEA:27702"/>
        <dbReference type="ChEBI" id="CHEBI:12952"/>
        <dbReference type="ChEBI" id="CHEBI:17886"/>
        <dbReference type="EC" id="5.3.1.12"/>
    </reaction>
</comment>
<comment type="pathway">
    <text evidence="1">Carbohydrate metabolism; pentose and glucuronate interconversion.</text>
</comment>
<comment type="similarity">
    <text evidence="1">Belongs to the metallo-dependent hydrolases superfamily. Uronate isomerase family.</text>
</comment>
<sequence length="466" mass="53804">MAFNTETFMLKNQAAIQLYEEVKRQPIFDYHCHLDPKDIFEDHIFDNIVDLWLGGDHYKWRLMRANGISEAEITGPASNLEKFKAFARTLERAYGNPVYHWSAMELKNVFGVNEILTESNAEEIYHRLNHFLKEHKISPRRLIADSKVMFIGTTDHPLDTLEWHKKLAADESFKTVVAPTFRPDEAFIEHRHFVDFITKLGDITQKEITDFSTFIAAMEERIAYFAQNGCRASDISFTEIVFEQTDELELNDLFNKVCEGYIPNQSEISKWQTAVFMELCRLYKKYGFVTQVHFGALRNNHSTIFEKLGADVGVDSLGDQVALTVNMNRLLDSLVKKDSLPKMIWYNLNPAYNIAVANTLANFQANELGVRSYLQFGAGWWFADTKLGMISQMNALAEQGMLANFIGMLTDSRSFLSYQRHDYFRRILCTYLGEWIEEGEVPEDYQALGSMAKDIAYQNAVNYFKN</sequence>
<gene>
    <name evidence="1" type="primary">uxaC</name>
    <name type="ordered locus">SAG0701</name>
</gene>
<dbReference type="EC" id="5.3.1.12" evidence="1"/>
<dbReference type="EMBL" id="AE009948">
    <property type="protein sequence ID" value="AAM99588.1"/>
    <property type="molecule type" value="Genomic_DNA"/>
</dbReference>
<dbReference type="RefSeq" id="NP_687716.1">
    <property type="nucleotide sequence ID" value="NC_004116.1"/>
</dbReference>
<dbReference type="RefSeq" id="WP_000885296.1">
    <property type="nucleotide sequence ID" value="NC_004116.1"/>
</dbReference>
<dbReference type="SMR" id="Q8E0M9"/>
<dbReference type="STRING" id="208435.SAG0701"/>
<dbReference type="KEGG" id="sag:SAG0701"/>
<dbReference type="PATRIC" id="fig|208435.3.peg.707"/>
<dbReference type="HOGENOM" id="CLU_044465_1_0_9"/>
<dbReference type="OrthoDB" id="9766564at2"/>
<dbReference type="UniPathway" id="UPA00246"/>
<dbReference type="Proteomes" id="UP000000821">
    <property type="component" value="Chromosome"/>
</dbReference>
<dbReference type="GO" id="GO:0008880">
    <property type="term" value="F:glucuronate isomerase activity"/>
    <property type="evidence" value="ECO:0007669"/>
    <property type="project" value="UniProtKB-UniRule"/>
</dbReference>
<dbReference type="GO" id="GO:0019698">
    <property type="term" value="P:D-galacturonate catabolic process"/>
    <property type="evidence" value="ECO:0007669"/>
    <property type="project" value="TreeGrafter"/>
</dbReference>
<dbReference type="GO" id="GO:0042840">
    <property type="term" value="P:D-glucuronate catabolic process"/>
    <property type="evidence" value="ECO:0007669"/>
    <property type="project" value="TreeGrafter"/>
</dbReference>
<dbReference type="Gene3D" id="3.20.20.140">
    <property type="entry name" value="Metal-dependent hydrolases"/>
    <property type="match status" value="1"/>
</dbReference>
<dbReference type="Gene3D" id="1.10.2020.10">
    <property type="entry name" value="uronate isomerase, domain 2, chain A"/>
    <property type="match status" value="1"/>
</dbReference>
<dbReference type="HAMAP" id="MF_00675">
    <property type="entry name" value="UxaC"/>
    <property type="match status" value="1"/>
</dbReference>
<dbReference type="InterPro" id="IPR032466">
    <property type="entry name" value="Metal_Hydrolase"/>
</dbReference>
<dbReference type="InterPro" id="IPR003766">
    <property type="entry name" value="Uronate_isomerase"/>
</dbReference>
<dbReference type="NCBIfam" id="NF002794">
    <property type="entry name" value="PRK02925.1"/>
    <property type="match status" value="1"/>
</dbReference>
<dbReference type="PANTHER" id="PTHR30068">
    <property type="entry name" value="URONATE ISOMERASE"/>
    <property type="match status" value="1"/>
</dbReference>
<dbReference type="PANTHER" id="PTHR30068:SF4">
    <property type="entry name" value="URONATE ISOMERASE"/>
    <property type="match status" value="1"/>
</dbReference>
<dbReference type="Pfam" id="PF02614">
    <property type="entry name" value="UxaC"/>
    <property type="match status" value="1"/>
</dbReference>
<dbReference type="SUPFAM" id="SSF51556">
    <property type="entry name" value="Metallo-dependent hydrolases"/>
    <property type="match status" value="1"/>
</dbReference>